<evidence type="ECO:0000250" key="1"/>
<evidence type="ECO:0000305" key="2"/>
<comment type="function">
    <text evidence="1">May play a role in neuropeptide signaling processes. Ligand for LGR7, RXFP3 and RXFP4 (By similarity).</text>
</comment>
<comment type="subunit">
    <text evidence="1">Heterodimer of a B chain and an A chain linked by two disulfide bonds.</text>
</comment>
<comment type="subcellular location">
    <subcellularLocation>
        <location evidence="1">Secreted</location>
    </subcellularLocation>
</comment>
<comment type="similarity">
    <text evidence="2">Belongs to the insulin family.</text>
</comment>
<proteinExistence type="inferred from homology"/>
<keyword id="KW-0165">Cleavage on pair of basic residues</keyword>
<keyword id="KW-1015">Disulfide bond</keyword>
<keyword id="KW-0372">Hormone</keyword>
<keyword id="KW-1185">Reference proteome</keyword>
<keyword id="KW-0964">Secreted</keyword>
<keyword id="KW-0732">Signal</keyword>
<name>REL3_PANTR</name>
<reference key="1">
    <citation type="journal article" date="2005" name="Nature">
        <title>Initial sequence of the chimpanzee genome and comparison with the human genome.</title>
        <authorList>
            <consortium name="Chimpanzee sequencing and analysis consortium"/>
        </authorList>
    </citation>
    <scope>NUCLEOTIDE SEQUENCE [LARGE SCALE GENOMIC DNA]</scope>
</reference>
<reference key="2">
    <citation type="journal article" date="2005" name="BMC Evol. Biol.">
        <title>Evolution of the relaxin-like peptide family.</title>
        <authorList>
            <person name="Wilkinson T.N."/>
            <person name="Speed T.P."/>
            <person name="Tregear G.W."/>
            <person name="Bathgate R.A.D."/>
        </authorList>
    </citation>
    <scope>IDENTIFICATION</scope>
</reference>
<organism>
    <name type="scientific">Pan troglodytes</name>
    <name type="common">Chimpanzee</name>
    <dbReference type="NCBI Taxonomy" id="9598"/>
    <lineage>
        <taxon>Eukaryota</taxon>
        <taxon>Metazoa</taxon>
        <taxon>Chordata</taxon>
        <taxon>Craniata</taxon>
        <taxon>Vertebrata</taxon>
        <taxon>Euteleostomi</taxon>
        <taxon>Mammalia</taxon>
        <taxon>Eutheria</taxon>
        <taxon>Euarchontoglires</taxon>
        <taxon>Primates</taxon>
        <taxon>Haplorrhini</taxon>
        <taxon>Catarrhini</taxon>
        <taxon>Hominidae</taxon>
        <taxon>Pan</taxon>
    </lineage>
</organism>
<accession>Q5CZK2</accession>
<protein>
    <recommendedName>
        <fullName>Relaxin-3</fullName>
    </recommendedName>
    <alternativeName>
        <fullName>Prorelaxin H3</fullName>
    </alternativeName>
    <component>
        <recommendedName>
            <fullName>Relaxin-3 B chain</fullName>
        </recommendedName>
    </component>
    <component>
        <recommendedName>
            <fullName>Relaxin-3 A chain</fullName>
        </recommendedName>
    </component>
</protein>
<feature type="signal peptide" evidence="1">
    <location>
        <begin position="1"/>
        <end position="25"/>
    </location>
</feature>
<feature type="peptide" id="PRO_0000016088" description="Relaxin-3 B chain" evidence="1">
    <location>
        <begin position="26"/>
        <end position="52"/>
    </location>
</feature>
<feature type="propeptide" id="PRO_0000016089" description="Connecting peptide" evidence="1">
    <location>
        <begin position="55"/>
        <end position="118"/>
    </location>
</feature>
<feature type="peptide" id="PRO_0000016090" description="Relaxin-3 A chain" evidence="1">
    <location>
        <begin position="119"/>
        <end position="142"/>
    </location>
</feature>
<feature type="disulfide bond" description="Interchain (between B and A chains)" evidence="1">
    <location>
        <begin position="35"/>
        <end position="129"/>
    </location>
</feature>
<feature type="disulfide bond" description="Interchain (between B and A chains)" evidence="1">
    <location>
        <begin position="47"/>
        <end position="142"/>
    </location>
</feature>
<feature type="disulfide bond" evidence="1">
    <location>
        <begin position="128"/>
        <end position="133"/>
    </location>
</feature>
<gene>
    <name type="primary">RLN3</name>
</gene>
<sequence length="142" mass="15348">MARYKLLLLLAVWVLTGELWPGAEARAAPYGVRLCGREFIRAVIFTCGGSRWRRSDILAHEAMGDTFPDADADGDSLAGELDEAMGSSEWLALTKSPQAFYRGRPSWQGTPGALRGSRDVLAGLSSSCCKWGCSKSEISSLC</sequence>
<dbReference type="RefSeq" id="XP_001171356.2">
    <property type="nucleotide sequence ID" value="XM_001171356.8"/>
</dbReference>
<dbReference type="SMR" id="Q5CZK2"/>
<dbReference type="FunCoup" id="Q5CZK2">
    <property type="interactions" value="684"/>
</dbReference>
<dbReference type="STRING" id="9598.ENSPTRP00000018051"/>
<dbReference type="PaxDb" id="9598-ENSPTRP00000018051"/>
<dbReference type="Ensembl" id="ENSPTRT00000019501.4">
    <property type="protein sequence ID" value="ENSPTRP00000018051.3"/>
    <property type="gene ID" value="ENSPTRG00000010576.4"/>
</dbReference>
<dbReference type="GeneID" id="747967"/>
<dbReference type="KEGG" id="ptr:747967"/>
<dbReference type="CTD" id="117579"/>
<dbReference type="VGNC" id="VGNC:2265">
    <property type="gene designation" value="RLN3"/>
</dbReference>
<dbReference type="eggNOG" id="ENOG502S2C4">
    <property type="taxonomic scope" value="Eukaryota"/>
</dbReference>
<dbReference type="GeneTree" id="ENSGT00940000154396"/>
<dbReference type="HOGENOM" id="CLU_120043_0_0_1"/>
<dbReference type="InParanoid" id="Q5CZK2"/>
<dbReference type="OMA" id="WGCSKRE"/>
<dbReference type="OrthoDB" id="11646at9604"/>
<dbReference type="TreeFam" id="TF333404"/>
<dbReference type="Proteomes" id="UP000002277">
    <property type="component" value="Chromosome 19"/>
</dbReference>
<dbReference type="GO" id="GO:0005576">
    <property type="term" value="C:extracellular region"/>
    <property type="evidence" value="ECO:0007669"/>
    <property type="project" value="UniProtKB-SubCell"/>
</dbReference>
<dbReference type="GO" id="GO:0001664">
    <property type="term" value="F:G protein-coupled receptor binding"/>
    <property type="evidence" value="ECO:0000318"/>
    <property type="project" value="GO_Central"/>
</dbReference>
<dbReference type="GO" id="GO:0005179">
    <property type="term" value="F:hormone activity"/>
    <property type="evidence" value="ECO:0007669"/>
    <property type="project" value="UniProtKB-KW"/>
</dbReference>
<dbReference type="CDD" id="cd04365">
    <property type="entry name" value="IlGF_relaxin_like"/>
    <property type="match status" value="1"/>
</dbReference>
<dbReference type="InterPro" id="IPR016179">
    <property type="entry name" value="Insulin-like"/>
</dbReference>
<dbReference type="InterPro" id="IPR051777">
    <property type="entry name" value="Insulin-like_neuro_ligands"/>
</dbReference>
<dbReference type="InterPro" id="IPR036438">
    <property type="entry name" value="Insulin-like_sf"/>
</dbReference>
<dbReference type="InterPro" id="IPR022353">
    <property type="entry name" value="Insulin_CS"/>
</dbReference>
<dbReference type="InterPro" id="IPR022352">
    <property type="entry name" value="Insulin_family"/>
</dbReference>
<dbReference type="PANTHER" id="PTHR20968">
    <property type="entry name" value="ILGF DOMAIN-CONTAINING PROTEIN"/>
    <property type="match status" value="1"/>
</dbReference>
<dbReference type="PANTHER" id="PTHR20968:SF0">
    <property type="entry name" value="RELAXIN-3"/>
    <property type="match status" value="1"/>
</dbReference>
<dbReference type="PRINTS" id="PR00276">
    <property type="entry name" value="INSULINFAMLY"/>
</dbReference>
<dbReference type="SMART" id="SM00078">
    <property type="entry name" value="IlGF"/>
    <property type="match status" value="1"/>
</dbReference>
<dbReference type="SUPFAM" id="SSF56994">
    <property type="entry name" value="Insulin-like"/>
    <property type="match status" value="1"/>
</dbReference>
<dbReference type="PROSITE" id="PS00262">
    <property type="entry name" value="INSULIN"/>
    <property type="match status" value="1"/>
</dbReference>